<protein>
    <recommendedName>
        <fullName evidence="1">Protein RecA</fullName>
    </recommendedName>
    <alternativeName>
        <fullName evidence="1">Recombinase A</fullName>
    </alternativeName>
</protein>
<organism>
    <name type="scientific">Shewanella woodyi (strain ATCC 51908 / MS32)</name>
    <dbReference type="NCBI Taxonomy" id="392500"/>
    <lineage>
        <taxon>Bacteria</taxon>
        <taxon>Pseudomonadati</taxon>
        <taxon>Pseudomonadota</taxon>
        <taxon>Gammaproteobacteria</taxon>
        <taxon>Alteromonadales</taxon>
        <taxon>Shewanellaceae</taxon>
        <taxon>Shewanella</taxon>
    </lineage>
</organism>
<comment type="function">
    <text evidence="1">Can catalyze the hydrolysis of ATP in the presence of single-stranded DNA, the ATP-dependent uptake of single-stranded DNA by duplex DNA, and the ATP-dependent hybridization of homologous single-stranded DNAs. It interacts with LexA causing its activation and leading to its autocatalytic cleavage.</text>
</comment>
<comment type="subcellular location">
    <subcellularLocation>
        <location evidence="1">Cytoplasm</location>
    </subcellularLocation>
</comment>
<comment type="similarity">
    <text evidence="1">Belongs to the RecA family.</text>
</comment>
<proteinExistence type="inferred from homology"/>
<name>RECA_SHEWM</name>
<sequence length="353" mass="37812">MKIDANKEKALNAVLGQIEKQFGKGSIMKLGENRSMDVETISTGSLSLDVALGAGGLPMGRIVEIYGPESSGKTTLTLELIAAAQREGKVCAFIDAEHALDPIYAKKLGVDIDNLLCSQPDTGEQALEICDALTRSGAVDVIVVDSVAALTPKAEIEGEIGDSHMGLAARMMSQAMRKLAGNLKQTNTMLIFINQIRMKIGVMFGNPETTTGGNALKFYASVRLDIRRTGAIKERDEVVGNETRVKVVKNKIAAPFKQAEFQILYGQGINRTGELVDLGVAHKLVEKAGAWYSYKGDKIGQGRANAGKFLLDNPAIAEEIDTALRGMLLASVEPAVESEVGDENVDLETGEIF</sequence>
<accession>B1KPS6</accession>
<keyword id="KW-0067">ATP-binding</keyword>
<keyword id="KW-0963">Cytoplasm</keyword>
<keyword id="KW-0227">DNA damage</keyword>
<keyword id="KW-0233">DNA recombination</keyword>
<keyword id="KW-0234">DNA repair</keyword>
<keyword id="KW-0238">DNA-binding</keyword>
<keyword id="KW-0547">Nucleotide-binding</keyword>
<keyword id="KW-1185">Reference proteome</keyword>
<keyword id="KW-0742">SOS response</keyword>
<gene>
    <name evidence="1" type="primary">recA</name>
    <name type="ordered locus">Swoo_3340</name>
</gene>
<feature type="chain" id="PRO_1000114368" description="Protein RecA">
    <location>
        <begin position="1"/>
        <end position="353"/>
    </location>
</feature>
<feature type="binding site" evidence="1">
    <location>
        <begin position="67"/>
        <end position="74"/>
    </location>
    <ligand>
        <name>ATP</name>
        <dbReference type="ChEBI" id="CHEBI:30616"/>
    </ligand>
</feature>
<reference key="1">
    <citation type="submission" date="2008-02" db="EMBL/GenBank/DDBJ databases">
        <title>Complete sequence of Shewanella woodyi ATCC 51908.</title>
        <authorList>
            <consortium name="US DOE Joint Genome Institute"/>
            <person name="Copeland A."/>
            <person name="Lucas S."/>
            <person name="Lapidus A."/>
            <person name="Glavina del Rio T."/>
            <person name="Dalin E."/>
            <person name="Tice H."/>
            <person name="Bruce D."/>
            <person name="Goodwin L."/>
            <person name="Pitluck S."/>
            <person name="Sims D."/>
            <person name="Brettin T."/>
            <person name="Detter J.C."/>
            <person name="Han C."/>
            <person name="Kuske C.R."/>
            <person name="Schmutz J."/>
            <person name="Larimer F."/>
            <person name="Land M."/>
            <person name="Hauser L."/>
            <person name="Kyrpides N."/>
            <person name="Lykidis A."/>
            <person name="Zhao J.-S."/>
            <person name="Richardson P."/>
        </authorList>
    </citation>
    <scope>NUCLEOTIDE SEQUENCE [LARGE SCALE GENOMIC DNA]</scope>
    <source>
        <strain>ATCC 51908 / MS32</strain>
    </source>
</reference>
<dbReference type="EMBL" id="CP000961">
    <property type="protein sequence ID" value="ACA87609.1"/>
    <property type="molecule type" value="Genomic_DNA"/>
</dbReference>
<dbReference type="RefSeq" id="WP_012325944.1">
    <property type="nucleotide sequence ID" value="NC_010506.1"/>
</dbReference>
<dbReference type="SMR" id="B1KPS6"/>
<dbReference type="STRING" id="392500.Swoo_3340"/>
<dbReference type="KEGG" id="swd:Swoo_3340"/>
<dbReference type="eggNOG" id="COG0468">
    <property type="taxonomic scope" value="Bacteria"/>
</dbReference>
<dbReference type="HOGENOM" id="CLU_040469_3_2_6"/>
<dbReference type="Proteomes" id="UP000002168">
    <property type="component" value="Chromosome"/>
</dbReference>
<dbReference type="GO" id="GO:0005829">
    <property type="term" value="C:cytosol"/>
    <property type="evidence" value="ECO:0007669"/>
    <property type="project" value="TreeGrafter"/>
</dbReference>
<dbReference type="GO" id="GO:0005524">
    <property type="term" value="F:ATP binding"/>
    <property type="evidence" value="ECO:0007669"/>
    <property type="project" value="UniProtKB-UniRule"/>
</dbReference>
<dbReference type="GO" id="GO:0016887">
    <property type="term" value="F:ATP hydrolysis activity"/>
    <property type="evidence" value="ECO:0007669"/>
    <property type="project" value="InterPro"/>
</dbReference>
<dbReference type="GO" id="GO:0140664">
    <property type="term" value="F:ATP-dependent DNA damage sensor activity"/>
    <property type="evidence" value="ECO:0007669"/>
    <property type="project" value="InterPro"/>
</dbReference>
<dbReference type="GO" id="GO:0003684">
    <property type="term" value="F:damaged DNA binding"/>
    <property type="evidence" value="ECO:0007669"/>
    <property type="project" value="UniProtKB-UniRule"/>
</dbReference>
<dbReference type="GO" id="GO:0003697">
    <property type="term" value="F:single-stranded DNA binding"/>
    <property type="evidence" value="ECO:0007669"/>
    <property type="project" value="UniProtKB-UniRule"/>
</dbReference>
<dbReference type="GO" id="GO:0006310">
    <property type="term" value="P:DNA recombination"/>
    <property type="evidence" value="ECO:0007669"/>
    <property type="project" value="UniProtKB-UniRule"/>
</dbReference>
<dbReference type="GO" id="GO:0006281">
    <property type="term" value="P:DNA repair"/>
    <property type="evidence" value="ECO:0007669"/>
    <property type="project" value="UniProtKB-UniRule"/>
</dbReference>
<dbReference type="GO" id="GO:0009432">
    <property type="term" value="P:SOS response"/>
    <property type="evidence" value="ECO:0007669"/>
    <property type="project" value="UniProtKB-UniRule"/>
</dbReference>
<dbReference type="CDD" id="cd00983">
    <property type="entry name" value="RecA"/>
    <property type="match status" value="1"/>
</dbReference>
<dbReference type="FunFam" id="3.40.50.300:FF:000087">
    <property type="entry name" value="Recombinase RecA"/>
    <property type="match status" value="1"/>
</dbReference>
<dbReference type="Gene3D" id="3.40.50.300">
    <property type="entry name" value="P-loop containing nucleotide triphosphate hydrolases"/>
    <property type="match status" value="1"/>
</dbReference>
<dbReference type="HAMAP" id="MF_00268">
    <property type="entry name" value="RecA"/>
    <property type="match status" value="1"/>
</dbReference>
<dbReference type="InterPro" id="IPR003593">
    <property type="entry name" value="AAA+_ATPase"/>
</dbReference>
<dbReference type="InterPro" id="IPR013765">
    <property type="entry name" value="DNA_recomb/repair_RecA"/>
</dbReference>
<dbReference type="InterPro" id="IPR020584">
    <property type="entry name" value="DNA_recomb/repair_RecA_CS"/>
</dbReference>
<dbReference type="InterPro" id="IPR027417">
    <property type="entry name" value="P-loop_NTPase"/>
</dbReference>
<dbReference type="InterPro" id="IPR049261">
    <property type="entry name" value="RecA-like_C"/>
</dbReference>
<dbReference type="InterPro" id="IPR049428">
    <property type="entry name" value="RecA-like_N"/>
</dbReference>
<dbReference type="InterPro" id="IPR020588">
    <property type="entry name" value="RecA_ATP-bd"/>
</dbReference>
<dbReference type="InterPro" id="IPR023400">
    <property type="entry name" value="RecA_C_sf"/>
</dbReference>
<dbReference type="InterPro" id="IPR020587">
    <property type="entry name" value="RecA_monomer-monomer_interface"/>
</dbReference>
<dbReference type="NCBIfam" id="TIGR02012">
    <property type="entry name" value="tigrfam_recA"/>
    <property type="match status" value="1"/>
</dbReference>
<dbReference type="PANTHER" id="PTHR45900:SF1">
    <property type="entry name" value="MITOCHONDRIAL DNA REPAIR PROTEIN RECA HOMOLOG-RELATED"/>
    <property type="match status" value="1"/>
</dbReference>
<dbReference type="PANTHER" id="PTHR45900">
    <property type="entry name" value="RECA"/>
    <property type="match status" value="1"/>
</dbReference>
<dbReference type="Pfam" id="PF00154">
    <property type="entry name" value="RecA"/>
    <property type="match status" value="1"/>
</dbReference>
<dbReference type="Pfam" id="PF21096">
    <property type="entry name" value="RecA_C"/>
    <property type="match status" value="1"/>
</dbReference>
<dbReference type="PRINTS" id="PR00142">
    <property type="entry name" value="RECA"/>
</dbReference>
<dbReference type="SMART" id="SM00382">
    <property type="entry name" value="AAA"/>
    <property type="match status" value="1"/>
</dbReference>
<dbReference type="SUPFAM" id="SSF52540">
    <property type="entry name" value="P-loop containing nucleoside triphosphate hydrolases"/>
    <property type="match status" value="1"/>
</dbReference>
<dbReference type="SUPFAM" id="SSF54752">
    <property type="entry name" value="RecA protein, C-terminal domain"/>
    <property type="match status" value="1"/>
</dbReference>
<dbReference type="PROSITE" id="PS00321">
    <property type="entry name" value="RECA_1"/>
    <property type="match status" value="1"/>
</dbReference>
<dbReference type="PROSITE" id="PS50162">
    <property type="entry name" value="RECA_2"/>
    <property type="match status" value="1"/>
</dbReference>
<dbReference type="PROSITE" id="PS50163">
    <property type="entry name" value="RECA_3"/>
    <property type="match status" value="1"/>
</dbReference>
<evidence type="ECO:0000255" key="1">
    <source>
        <dbReference type="HAMAP-Rule" id="MF_00268"/>
    </source>
</evidence>